<evidence type="ECO:0000255" key="1">
    <source>
        <dbReference type="HAMAP-Rule" id="MF_00013"/>
    </source>
</evidence>
<evidence type="ECO:0000255" key="2">
    <source>
        <dbReference type="PROSITE-ProRule" id="PRU01067"/>
    </source>
</evidence>
<keyword id="KW-0012">Acyltransferase</keyword>
<keyword id="KW-0963">Cytoplasm</keyword>
<keyword id="KW-0808">Transferase</keyword>
<feature type="chain" id="PRO_1000001126" description="Octanoyltransferase">
    <location>
        <begin position="1"/>
        <end position="209"/>
    </location>
</feature>
<feature type="domain" description="BPL/LPL catalytic" evidence="2">
    <location>
        <begin position="30"/>
        <end position="209"/>
    </location>
</feature>
<feature type="active site" description="Acyl-thioester intermediate" evidence="1">
    <location>
        <position position="174"/>
    </location>
</feature>
<feature type="binding site" evidence="1">
    <location>
        <begin position="69"/>
        <end position="76"/>
    </location>
    <ligand>
        <name>substrate</name>
    </ligand>
</feature>
<feature type="binding site" evidence="1">
    <location>
        <begin position="143"/>
        <end position="145"/>
    </location>
    <ligand>
        <name>substrate</name>
    </ligand>
</feature>
<feature type="binding site" evidence="1">
    <location>
        <begin position="156"/>
        <end position="158"/>
    </location>
    <ligand>
        <name>substrate</name>
    </ligand>
</feature>
<feature type="site" description="Lowers pKa of active site Cys" evidence="1">
    <location>
        <position position="140"/>
    </location>
</feature>
<reference key="1">
    <citation type="submission" date="2007-09" db="EMBL/GenBank/DDBJ databases">
        <title>Complete genome sequence of Rickettsia rickettsii.</title>
        <authorList>
            <person name="Madan A."/>
            <person name="Fahey J."/>
            <person name="Helton E."/>
            <person name="Ketteman M."/>
            <person name="Madan A."/>
            <person name="Rodrigues S."/>
            <person name="Sanchez A."/>
            <person name="Dasch G."/>
            <person name="Eremeeva M."/>
        </authorList>
    </citation>
    <scope>NUCLEOTIDE SEQUENCE [LARGE SCALE GENOMIC DNA]</scope>
    <source>
        <strain>Sheila Smith</strain>
    </source>
</reference>
<name>LIPB_RICRS</name>
<gene>
    <name evidence="1" type="primary">lipB</name>
    <name type="ordered locus">A1G_07450</name>
</gene>
<protein>
    <recommendedName>
        <fullName evidence="1">Octanoyltransferase</fullName>
        <ecNumber evidence="1">2.3.1.181</ecNumber>
    </recommendedName>
    <alternativeName>
        <fullName evidence="1">Lipoate-protein ligase B</fullName>
    </alternativeName>
    <alternativeName>
        <fullName evidence="1">Lipoyl/octanoyl transferase</fullName>
    </alternativeName>
    <alternativeName>
        <fullName evidence="1">Octanoyl-[acyl-carrier-protein]-protein N-octanoyltransferase</fullName>
    </alternativeName>
</protein>
<accession>A8GU54</accession>
<dbReference type="EC" id="2.3.1.181" evidence="1"/>
<dbReference type="EMBL" id="CP000848">
    <property type="protein sequence ID" value="ABV76929.1"/>
    <property type="molecule type" value="Genomic_DNA"/>
</dbReference>
<dbReference type="RefSeq" id="WP_012151465.1">
    <property type="nucleotide sequence ID" value="NZ_CP121767.1"/>
</dbReference>
<dbReference type="SMR" id="A8GU54"/>
<dbReference type="GeneID" id="79937951"/>
<dbReference type="KEGG" id="rri:A1G_07450"/>
<dbReference type="HOGENOM" id="CLU_035168_3_0_5"/>
<dbReference type="UniPathway" id="UPA00538">
    <property type="reaction ID" value="UER00592"/>
</dbReference>
<dbReference type="Proteomes" id="UP000006832">
    <property type="component" value="Chromosome"/>
</dbReference>
<dbReference type="GO" id="GO:0005737">
    <property type="term" value="C:cytoplasm"/>
    <property type="evidence" value="ECO:0007669"/>
    <property type="project" value="UniProtKB-SubCell"/>
</dbReference>
<dbReference type="GO" id="GO:0033819">
    <property type="term" value="F:lipoyl(octanoyl) transferase activity"/>
    <property type="evidence" value="ECO:0007669"/>
    <property type="project" value="UniProtKB-EC"/>
</dbReference>
<dbReference type="GO" id="GO:0036211">
    <property type="term" value="P:protein modification process"/>
    <property type="evidence" value="ECO:0007669"/>
    <property type="project" value="InterPro"/>
</dbReference>
<dbReference type="CDD" id="cd16444">
    <property type="entry name" value="LipB"/>
    <property type="match status" value="1"/>
</dbReference>
<dbReference type="Gene3D" id="3.30.930.10">
    <property type="entry name" value="Bira Bifunctional Protein, Domain 2"/>
    <property type="match status" value="1"/>
</dbReference>
<dbReference type="HAMAP" id="MF_00013">
    <property type="entry name" value="LipB"/>
    <property type="match status" value="1"/>
</dbReference>
<dbReference type="InterPro" id="IPR045864">
    <property type="entry name" value="aa-tRNA-synth_II/BPL/LPL"/>
</dbReference>
<dbReference type="InterPro" id="IPR004143">
    <property type="entry name" value="BPL_LPL_catalytic"/>
</dbReference>
<dbReference type="InterPro" id="IPR000544">
    <property type="entry name" value="Octanoyltransferase"/>
</dbReference>
<dbReference type="InterPro" id="IPR020605">
    <property type="entry name" value="Octanoyltransferase_CS"/>
</dbReference>
<dbReference type="NCBIfam" id="TIGR00214">
    <property type="entry name" value="lipB"/>
    <property type="match status" value="1"/>
</dbReference>
<dbReference type="NCBIfam" id="NF010921">
    <property type="entry name" value="PRK14341.1"/>
    <property type="match status" value="1"/>
</dbReference>
<dbReference type="NCBIfam" id="NF010925">
    <property type="entry name" value="PRK14345.1"/>
    <property type="match status" value="1"/>
</dbReference>
<dbReference type="PANTHER" id="PTHR10993:SF7">
    <property type="entry name" value="LIPOYLTRANSFERASE 2, MITOCHONDRIAL-RELATED"/>
    <property type="match status" value="1"/>
</dbReference>
<dbReference type="PANTHER" id="PTHR10993">
    <property type="entry name" value="OCTANOYLTRANSFERASE"/>
    <property type="match status" value="1"/>
</dbReference>
<dbReference type="Pfam" id="PF21948">
    <property type="entry name" value="LplA-B_cat"/>
    <property type="match status" value="1"/>
</dbReference>
<dbReference type="PIRSF" id="PIRSF016262">
    <property type="entry name" value="LPLase"/>
    <property type="match status" value="1"/>
</dbReference>
<dbReference type="SUPFAM" id="SSF55681">
    <property type="entry name" value="Class II aaRS and biotin synthetases"/>
    <property type="match status" value="1"/>
</dbReference>
<dbReference type="PROSITE" id="PS51733">
    <property type="entry name" value="BPL_LPL_CATALYTIC"/>
    <property type="match status" value="1"/>
</dbReference>
<dbReference type="PROSITE" id="PS01313">
    <property type="entry name" value="LIPB"/>
    <property type="match status" value="1"/>
</dbReference>
<organism>
    <name type="scientific">Rickettsia rickettsii (strain Sheila Smith)</name>
    <dbReference type="NCBI Taxonomy" id="392021"/>
    <lineage>
        <taxon>Bacteria</taxon>
        <taxon>Pseudomonadati</taxon>
        <taxon>Pseudomonadota</taxon>
        <taxon>Alphaproteobacteria</taxon>
        <taxon>Rickettsiales</taxon>
        <taxon>Rickettsiaceae</taxon>
        <taxon>Rickettsieae</taxon>
        <taxon>Rickettsia</taxon>
        <taxon>spotted fever group</taxon>
    </lineage>
</organism>
<comment type="function">
    <text evidence="1">Catalyzes the transfer of endogenously produced octanoic acid from octanoyl-acyl-carrier-protein onto the lipoyl domains of lipoate-dependent enzymes. Lipoyl-ACP can also act as a substrate although octanoyl-ACP is likely to be the physiological substrate.</text>
</comment>
<comment type="catalytic activity">
    <reaction evidence="1">
        <text>octanoyl-[ACP] + L-lysyl-[protein] = N(6)-octanoyl-L-lysyl-[protein] + holo-[ACP] + H(+)</text>
        <dbReference type="Rhea" id="RHEA:17665"/>
        <dbReference type="Rhea" id="RHEA-COMP:9636"/>
        <dbReference type="Rhea" id="RHEA-COMP:9685"/>
        <dbReference type="Rhea" id="RHEA-COMP:9752"/>
        <dbReference type="Rhea" id="RHEA-COMP:9928"/>
        <dbReference type="ChEBI" id="CHEBI:15378"/>
        <dbReference type="ChEBI" id="CHEBI:29969"/>
        <dbReference type="ChEBI" id="CHEBI:64479"/>
        <dbReference type="ChEBI" id="CHEBI:78463"/>
        <dbReference type="ChEBI" id="CHEBI:78809"/>
        <dbReference type="EC" id="2.3.1.181"/>
    </reaction>
</comment>
<comment type="pathway">
    <text evidence="1">Protein modification; protein lipoylation via endogenous pathway; protein N(6)-(lipoyl)lysine from octanoyl-[acyl-carrier-protein]: step 1/2.</text>
</comment>
<comment type="subcellular location">
    <subcellularLocation>
        <location evidence="1">Cytoplasm</location>
    </subcellularLocation>
</comment>
<comment type="miscellaneous">
    <text evidence="1">In the reaction, the free carboxyl group of octanoic acid is attached via an amide linkage to the epsilon-amino group of a specific lysine residue of lipoyl domains of lipoate-dependent enzymes.</text>
</comment>
<comment type="similarity">
    <text evidence="1">Belongs to the LipB family.</text>
</comment>
<sequence>MIRFITIPDFADYQVILKLMEDYVNKVINDHEPEIIYLVEHSEVYTAGTNYKQEELLNYGDIPVIYTGRGGKFTFHGPGQRVIYPILNLDSPNRYKDLKLYIKMLEEWIINSLNYFGIKAYIIKDKVGIWVKVRKDEFAKIAAIGVRVRKWVTYHGVAINISTDLSKFSGIIPCGLENSLVTSLNQLGIHVEMSEFDKIIQTEFNKIFK</sequence>
<proteinExistence type="inferred from homology"/>